<organism>
    <name type="scientific">Bordetella parapertussis (strain 12822 / ATCC BAA-587 / NCTC 13253)</name>
    <dbReference type="NCBI Taxonomy" id="257311"/>
    <lineage>
        <taxon>Bacteria</taxon>
        <taxon>Pseudomonadati</taxon>
        <taxon>Pseudomonadota</taxon>
        <taxon>Betaproteobacteria</taxon>
        <taxon>Burkholderiales</taxon>
        <taxon>Alcaligenaceae</taxon>
        <taxon>Bordetella</taxon>
    </lineage>
</organism>
<comment type="function">
    <text evidence="1">DNA ligase that catalyzes the formation of phosphodiester linkages between 5'-phosphoryl and 3'-hydroxyl groups in double-stranded DNA using NAD as a coenzyme and as the energy source for the reaction. It is essential for DNA replication and repair of damaged DNA.</text>
</comment>
<comment type="catalytic activity">
    <reaction evidence="1">
        <text>NAD(+) + (deoxyribonucleotide)n-3'-hydroxyl + 5'-phospho-(deoxyribonucleotide)m = (deoxyribonucleotide)n+m + AMP + beta-nicotinamide D-nucleotide.</text>
        <dbReference type="EC" id="6.5.1.2"/>
    </reaction>
</comment>
<comment type="cofactor">
    <cofactor evidence="1">
        <name>Mg(2+)</name>
        <dbReference type="ChEBI" id="CHEBI:18420"/>
    </cofactor>
    <cofactor evidence="1">
        <name>Mn(2+)</name>
        <dbReference type="ChEBI" id="CHEBI:29035"/>
    </cofactor>
</comment>
<comment type="similarity">
    <text evidence="1">Belongs to the NAD-dependent DNA ligase family. LigA subfamily.</text>
</comment>
<proteinExistence type="inferred from homology"/>
<reference key="1">
    <citation type="journal article" date="2003" name="Nat. Genet.">
        <title>Comparative analysis of the genome sequences of Bordetella pertussis, Bordetella parapertussis and Bordetella bronchiseptica.</title>
        <authorList>
            <person name="Parkhill J."/>
            <person name="Sebaihia M."/>
            <person name="Preston A."/>
            <person name="Murphy L.D."/>
            <person name="Thomson N.R."/>
            <person name="Harris D.E."/>
            <person name="Holden M.T.G."/>
            <person name="Churcher C.M."/>
            <person name="Bentley S.D."/>
            <person name="Mungall K.L."/>
            <person name="Cerdeno-Tarraga A.-M."/>
            <person name="Temple L."/>
            <person name="James K.D."/>
            <person name="Harris B."/>
            <person name="Quail M.A."/>
            <person name="Achtman M."/>
            <person name="Atkin R."/>
            <person name="Baker S."/>
            <person name="Basham D."/>
            <person name="Bason N."/>
            <person name="Cherevach I."/>
            <person name="Chillingworth T."/>
            <person name="Collins M."/>
            <person name="Cronin A."/>
            <person name="Davis P."/>
            <person name="Doggett J."/>
            <person name="Feltwell T."/>
            <person name="Goble A."/>
            <person name="Hamlin N."/>
            <person name="Hauser H."/>
            <person name="Holroyd S."/>
            <person name="Jagels K."/>
            <person name="Leather S."/>
            <person name="Moule S."/>
            <person name="Norberczak H."/>
            <person name="O'Neil S."/>
            <person name="Ormond D."/>
            <person name="Price C."/>
            <person name="Rabbinowitsch E."/>
            <person name="Rutter S."/>
            <person name="Sanders M."/>
            <person name="Saunders D."/>
            <person name="Seeger K."/>
            <person name="Sharp S."/>
            <person name="Simmonds M."/>
            <person name="Skelton J."/>
            <person name="Squares R."/>
            <person name="Squares S."/>
            <person name="Stevens K."/>
            <person name="Unwin L."/>
            <person name="Whitehead S."/>
            <person name="Barrell B.G."/>
            <person name="Maskell D.J."/>
        </authorList>
    </citation>
    <scope>NUCLEOTIDE SEQUENCE [LARGE SCALE GENOMIC DNA]</scope>
    <source>
        <strain>12822 / ATCC BAA-587 / NCTC 13253</strain>
    </source>
</reference>
<evidence type="ECO:0000255" key="1">
    <source>
        <dbReference type="HAMAP-Rule" id="MF_01588"/>
    </source>
</evidence>
<name>DNLJ_BORPA</name>
<keyword id="KW-0227">DNA damage</keyword>
<keyword id="KW-0234">DNA repair</keyword>
<keyword id="KW-0235">DNA replication</keyword>
<keyword id="KW-0436">Ligase</keyword>
<keyword id="KW-0460">Magnesium</keyword>
<keyword id="KW-0464">Manganese</keyword>
<keyword id="KW-0479">Metal-binding</keyword>
<keyword id="KW-0520">NAD</keyword>
<keyword id="KW-0862">Zinc</keyword>
<sequence>MAQAGPTPQQAIARLRAEIEQHNIRYYVHDDPSVPDAEYDALMRDLQALEAEHPELVTPDSPTQRVGAAPLAEFGSVRHAVPMLSLGNAFDEEDVRAFDKRVADTLRGAGLLGLDQQVEYFCELKLDGLAISLCYEEGRLAQAATRGDGQTGEDVTANIRTIKGVPLRLHGAPRVLEVRGEVLMNRAEFERLNRTQAARGEKVFVNPRNAAAGSLRQLDPRITAQRPLRFFAYSWGEVHGLPEGMPTRFDEPAPGVRVASTLPRDTHGGMLDWLAELGLPVNLRHNHRERGADGLLAFYERIGKLRADLPYDIDGVVYKVDALPSQRVLGFVARAPRFALAHKFPAEEAVTQLLGIEVQVGRTGAITPVARLAPVFVGGVTVTNATLHNEDEIRRKDVRIGDTVIVRRAGDVIPEVVGPVLEKRPADAREFVMLTACPICGSAIERPEGEAIARCTGGLFCAAQRKQTLLHAAGRKALDIEGLGEKLIDQLVDADRVKSLADIYSLTAFELAALERMGKKSAENLVAAIDQARRPALGRLLFALGIRHVGETTARDVARHFGSMERIMDASEEALLAVPDVGGVVAGSIRRFFAEPHNREIVEQLTQQGVHPQAEAEPEGTSLAGKTFVLTGTMPNWTRDEATRRILAAGGKVSGSVSKKTAYLVTGEDAGSKLTKAQELGVPVLDEDGLKALLGL</sequence>
<dbReference type="EC" id="6.5.1.2" evidence="1"/>
<dbReference type="EMBL" id="BX640433">
    <property type="protein sequence ID" value="CAE38638.1"/>
    <property type="molecule type" value="Genomic_DNA"/>
</dbReference>
<dbReference type="RefSeq" id="WP_010929020.1">
    <property type="nucleotide sequence ID" value="NC_002928.3"/>
</dbReference>
<dbReference type="SMR" id="Q7W0T4"/>
<dbReference type="GeneID" id="93205135"/>
<dbReference type="KEGG" id="bpa:BPP3353"/>
<dbReference type="HOGENOM" id="CLU_007764_2_1_4"/>
<dbReference type="Proteomes" id="UP000001421">
    <property type="component" value="Chromosome"/>
</dbReference>
<dbReference type="GO" id="GO:0005829">
    <property type="term" value="C:cytosol"/>
    <property type="evidence" value="ECO:0007669"/>
    <property type="project" value="TreeGrafter"/>
</dbReference>
<dbReference type="GO" id="GO:0003677">
    <property type="term" value="F:DNA binding"/>
    <property type="evidence" value="ECO:0007669"/>
    <property type="project" value="InterPro"/>
</dbReference>
<dbReference type="GO" id="GO:0003911">
    <property type="term" value="F:DNA ligase (NAD+) activity"/>
    <property type="evidence" value="ECO:0007669"/>
    <property type="project" value="UniProtKB-UniRule"/>
</dbReference>
<dbReference type="GO" id="GO:0046872">
    <property type="term" value="F:metal ion binding"/>
    <property type="evidence" value="ECO:0007669"/>
    <property type="project" value="UniProtKB-KW"/>
</dbReference>
<dbReference type="GO" id="GO:0006281">
    <property type="term" value="P:DNA repair"/>
    <property type="evidence" value="ECO:0007669"/>
    <property type="project" value="UniProtKB-KW"/>
</dbReference>
<dbReference type="GO" id="GO:0006260">
    <property type="term" value="P:DNA replication"/>
    <property type="evidence" value="ECO:0007669"/>
    <property type="project" value="UniProtKB-KW"/>
</dbReference>
<dbReference type="CDD" id="cd17748">
    <property type="entry name" value="BRCT_DNA_ligase_like"/>
    <property type="match status" value="1"/>
</dbReference>
<dbReference type="CDD" id="cd00114">
    <property type="entry name" value="LIGANc"/>
    <property type="match status" value="1"/>
</dbReference>
<dbReference type="FunFam" id="1.10.150.20:FF:000006">
    <property type="entry name" value="DNA ligase"/>
    <property type="match status" value="1"/>
</dbReference>
<dbReference type="FunFam" id="1.10.150.20:FF:000007">
    <property type="entry name" value="DNA ligase"/>
    <property type="match status" value="1"/>
</dbReference>
<dbReference type="FunFam" id="1.10.287.610:FF:000002">
    <property type="entry name" value="DNA ligase"/>
    <property type="match status" value="1"/>
</dbReference>
<dbReference type="FunFam" id="2.40.50.140:FF:000012">
    <property type="entry name" value="DNA ligase"/>
    <property type="match status" value="1"/>
</dbReference>
<dbReference type="Gene3D" id="6.20.10.30">
    <property type="match status" value="1"/>
</dbReference>
<dbReference type="Gene3D" id="1.10.150.20">
    <property type="entry name" value="5' to 3' exonuclease, C-terminal subdomain"/>
    <property type="match status" value="2"/>
</dbReference>
<dbReference type="Gene3D" id="3.40.50.10190">
    <property type="entry name" value="BRCT domain"/>
    <property type="match status" value="1"/>
</dbReference>
<dbReference type="Gene3D" id="3.30.470.30">
    <property type="entry name" value="DNA ligase/mRNA capping enzyme"/>
    <property type="match status" value="1"/>
</dbReference>
<dbReference type="Gene3D" id="1.10.287.610">
    <property type="entry name" value="Helix hairpin bin"/>
    <property type="match status" value="1"/>
</dbReference>
<dbReference type="Gene3D" id="2.40.50.140">
    <property type="entry name" value="Nucleic acid-binding proteins"/>
    <property type="match status" value="1"/>
</dbReference>
<dbReference type="HAMAP" id="MF_01588">
    <property type="entry name" value="DNA_ligase_A"/>
    <property type="match status" value="1"/>
</dbReference>
<dbReference type="InterPro" id="IPR001357">
    <property type="entry name" value="BRCT_dom"/>
</dbReference>
<dbReference type="InterPro" id="IPR036420">
    <property type="entry name" value="BRCT_dom_sf"/>
</dbReference>
<dbReference type="InterPro" id="IPR041663">
    <property type="entry name" value="DisA/LigA_HHH"/>
</dbReference>
<dbReference type="InterPro" id="IPR001679">
    <property type="entry name" value="DNA_ligase"/>
</dbReference>
<dbReference type="InterPro" id="IPR018239">
    <property type="entry name" value="DNA_ligase_AS"/>
</dbReference>
<dbReference type="InterPro" id="IPR033136">
    <property type="entry name" value="DNA_ligase_CS"/>
</dbReference>
<dbReference type="InterPro" id="IPR013839">
    <property type="entry name" value="DNAligase_adenylation"/>
</dbReference>
<dbReference type="InterPro" id="IPR013840">
    <property type="entry name" value="DNAligase_N"/>
</dbReference>
<dbReference type="InterPro" id="IPR003583">
    <property type="entry name" value="Hlx-hairpin-Hlx_DNA-bd_motif"/>
</dbReference>
<dbReference type="InterPro" id="IPR012340">
    <property type="entry name" value="NA-bd_OB-fold"/>
</dbReference>
<dbReference type="InterPro" id="IPR004150">
    <property type="entry name" value="NAD_DNA_ligase_OB"/>
</dbReference>
<dbReference type="InterPro" id="IPR010994">
    <property type="entry name" value="RuvA_2-like"/>
</dbReference>
<dbReference type="InterPro" id="IPR004149">
    <property type="entry name" value="Znf_DNAligase_C4"/>
</dbReference>
<dbReference type="NCBIfam" id="TIGR00575">
    <property type="entry name" value="dnlj"/>
    <property type="match status" value="1"/>
</dbReference>
<dbReference type="NCBIfam" id="NF005932">
    <property type="entry name" value="PRK07956.1"/>
    <property type="match status" value="1"/>
</dbReference>
<dbReference type="PANTHER" id="PTHR23389">
    <property type="entry name" value="CHROMOSOME TRANSMISSION FIDELITY FACTOR 18"/>
    <property type="match status" value="1"/>
</dbReference>
<dbReference type="PANTHER" id="PTHR23389:SF9">
    <property type="entry name" value="DNA LIGASE"/>
    <property type="match status" value="1"/>
</dbReference>
<dbReference type="Pfam" id="PF00533">
    <property type="entry name" value="BRCT"/>
    <property type="match status" value="1"/>
</dbReference>
<dbReference type="Pfam" id="PF01653">
    <property type="entry name" value="DNA_ligase_aden"/>
    <property type="match status" value="2"/>
</dbReference>
<dbReference type="Pfam" id="PF03120">
    <property type="entry name" value="DNA_ligase_OB"/>
    <property type="match status" value="1"/>
</dbReference>
<dbReference type="Pfam" id="PF03119">
    <property type="entry name" value="DNA_ligase_ZBD"/>
    <property type="match status" value="1"/>
</dbReference>
<dbReference type="Pfam" id="PF12826">
    <property type="entry name" value="HHH_2"/>
    <property type="match status" value="1"/>
</dbReference>
<dbReference type="Pfam" id="PF14520">
    <property type="entry name" value="HHH_5"/>
    <property type="match status" value="1"/>
</dbReference>
<dbReference type="Pfam" id="PF22745">
    <property type="entry name" value="Nlig-Ia"/>
    <property type="match status" value="1"/>
</dbReference>
<dbReference type="PIRSF" id="PIRSF001604">
    <property type="entry name" value="LigA"/>
    <property type="match status" value="1"/>
</dbReference>
<dbReference type="SMART" id="SM00292">
    <property type="entry name" value="BRCT"/>
    <property type="match status" value="1"/>
</dbReference>
<dbReference type="SMART" id="SM00278">
    <property type="entry name" value="HhH1"/>
    <property type="match status" value="4"/>
</dbReference>
<dbReference type="SMART" id="SM00532">
    <property type="entry name" value="LIGANc"/>
    <property type="match status" value="1"/>
</dbReference>
<dbReference type="SUPFAM" id="SSF52113">
    <property type="entry name" value="BRCT domain"/>
    <property type="match status" value="1"/>
</dbReference>
<dbReference type="SUPFAM" id="SSF56091">
    <property type="entry name" value="DNA ligase/mRNA capping enzyme, catalytic domain"/>
    <property type="match status" value="1"/>
</dbReference>
<dbReference type="SUPFAM" id="SSF50249">
    <property type="entry name" value="Nucleic acid-binding proteins"/>
    <property type="match status" value="1"/>
</dbReference>
<dbReference type="SUPFAM" id="SSF47781">
    <property type="entry name" value="RuvA domain 2-like"/>
    <property type="match status" value="1"/>
</dbReference>
<dbReference type="PROSITE" id="PS50172">
    <property type="entry name" value="BRCT"/>
    <property type="match status" value="1"/>
</dbReference>
<dbReference type="PROSITE" id="PS01055">
    <property type="entry name" value="DNA_LIGASE_N1"/>
    <property type="match status" value="1"/>
</dbReference>
<dbReference type="PROSITE" id="PS01056">
    <property type="entry name" value="DNA_LIGASE_N2"/>
    <property type="match status" value="1"/>
</dbReference>
<accession>Q7W0T4</accession>
<feature type="chain" id="PRO_0000313145" description="DNA ligase">
    <location>
        <begin position="1"/>
        <end position="696"/>
    </location>
</feature>
<feature type="domain" description="BRCT" evidence="1">
    <location>
        <begin position="618"/>
        <end position="696"/>
    </location>
</feature>
<feature type="active site" description="N6-AMP-lysine intermediate" evidence="1">
    <location>
        <position position="125"/>
    </location>
</feature>
<feature type="binding site" evidence="1">
    <location>
        <begin position="36"/>
        <end position="40"/>
    </location>
    <ligand>
        <name>NAD(+)</name>
        <dbReference type="ChEBI" id="CHEBI:57540"/>
    </ligand>
</feature>
<feature type="binding site" evidence="1">
    <location>
        <begin position="85"/>
        <end position="86"/>
    </location>
    <ligand>
        <name>NAD(+)</name>
        <dbReference type="ChEBI" id="CHEBI:57540"/>
    </ligand>
</feature>
<feature type="binding site" evidence="1">
    <location>
        <position position="123"/>
    </location>
    <ligand>
        <name>NAD(+)</name>
        <dbReference type="ChEBI" id="CHEBI:57540"/>
    </ligand>
</feature>
<feature type="binding site" evidence="1">
    <location>
        <position position="146"/>
    </location>
    <ligand>
        <name>NAD(+)</name>
        <dbReference type="ChEBI" id="CHEBI:57540"/>
    </ligand>
</feature>
<feature type="binding site" evidence="1">
    <location>
        <position position="181"/>
    </location>
    <ligand>
        <name>NAD(+)</name>
        <dbReference type="ChEBI" id="CHEBI:57540"/>
    </ligand>
</feature>
<feature type="binding site" evidence="1">
    <location>
        <position position="319"/>
    </location>
    <ligand>
        <name>NAD(+)</name>
        <dbReference type="ChEBI" id="CHEBI:57540"/>
    </ligand>
</feature>
<feature type="binding site" evidence="1">
    <location>
        <position position="343"/>
    </location>
    <ligand>
        <name>NAD(+)</name>
        <dbReference type="ChEBI" id="CHEBI:57540"/>
    </ligand>
</feature>
<feature type="binding site" evidence="1">
    <location>
        <position position="437"/>
    </location>
    <ligand>
        <name>Zn(2+)</name>
        <dbReference type="ChEBI" id="CHEBI:29105"/>
    </ligand>
</feature>
<feature type="binding site" evidence="1">
    <location>
        <position position="440"/>
    </location>
    <ligand>
        <name>Zn(2+)</name>
        <dbReference type="ChEBI" id="CHEBI:29105"/>
    </ligand>
</feature>
<feature type="binding site" evidence="1">
    <location>
        <position position="455"/>
    </location>
    <ligand>
        <name>Zn(2+)</name>
        <dbReference type="ChEBI" id="CHEBI:29105"/>
    </ligand>
</feature>
<feature type="binding site" evidence="1">
    <location>
        <position position="461"/>
    </location>
    <ligand>
        <name>Zn(2+)</name>
        <dbReference type="ChEBI" id="CHEBI:29105"/>
    </ligand>
</feature>
<protein>
    <recommendedName>
        <fullName evidence="1">DNA ligase</fullName>
        <ecNumber evidence="1">6.5.1.2</ecNumber>
    </recommendedName>
    <alternativeName>
        <fullName evidence="1">Polydeoxyribonucleotide synthase [NAD(+)]</fullName>
    </alternativeName>
</protein>
<gene>
    <name evidence="1" type="primary">ligA</name>
    <name type="ordered locus">BPP3353</name>
</gene>